<protein>
    <recommendedName>
        <fullName evidence="1">Thymidylate kinase</fullName>
        <ecNumber evidence="1">2.7.4.9</ecNumber>
    </recommendedName>
    <alternativeName>
        <fullName evidence="1">dTMP kinase</fullName>
    </alternativeName>
</protein>
<comment type="function">
    <text evidence="1">Phosphorylation of dTMP to form dTDP in both de novo and salvage pathways of dTTP synthesis.</text>
</comment>
<comment type="catalytic activity">
    <reaction evidence="1">
        <text>dTMP + ATP = dTDP + ADP</text>
        <dbReference type="Rhea" id="RHEA:13517"/>
        <dbReference type="ChEBI" id="CHEBI:30616"/>
        <dbReference type="ChEBI" id="CHEBI:58369"/>
        <dbReference type="ChEBI" id="CHEBI:63528"/>
        <dbReference type="ChEBI" id="CHEBI:456216"/>
        <dbReference type="EC" id="2.7.4.9"/>
    </reaction>
</comment>
<comment type="similarity">
    <text evidence="1">Belongs to the thymidylate kinase family.</text>
</comment>
<proteinExistence type="inferred from homology"/>
<accession>Q28SW8</accession>
<dbReference type="EC" id="2.7.4.9" evidence="1"/>
<dbReference type="EMBL" id="CP000264">
    <property type="protein sequence ID" value="ABD54194.1"/>
    <property type="molecule type" value="Genomic_DNA"/>
</dbReference>
<dbReference type="RefSeq" id="WP_011454401.1">
    <property type="nucleotide sequence ID" value="NC_007802.1"/>
</dbReference>
<dbReference type="SMR" id="Q28SW8"/>
<dbReference type="STRING" id="290400.Jann_1277"/>
<dbReference type="KEGG" id="jan:Jann_1277"/>
<dbReference type="eggNOG" id="COG0125">
    <property type="taxonomic scope" value="Bacteria"/>
</dbReference>
<dbReference type="HOGENOM" id="CLU_049131_0_0_5"/>
<dbReference type="OrthoDB" id="9774907at2"/>
<dbReference type="Proteomes" id="UP000008326">
    <property type="component" value="Chromosome"/>
</dbReference>
<dbReference type="GO" id="GO:0005829">
    <property type="term" value="C:cytosol"/>
    <property type="evidence" value="ECO:0007669"/>
    <property type="project" value="TreeGrafter"/>
</dbReference>
<dbReference type="GO" id="GO:0005524">
    <property type="term" value="F:ATP binding"/>
    <property type="evidence" value="ECO:0007669"/>
    <property type="project" value="UniProtKB-UniRule"/>
</dbReference>
<dbReference type="GO" id="GO:0004798">
    <property type="term" value="F:dTMP kinase activity"/>
    <property type="evidence" value="ECO:0007669"/>
    <property type="project" value="UniProtKB-UniRule"/>
</dbReference>
<dbReference type="GO" id="GO:0006233">
    <property type="term" value="P:dTDP biosynthetic process"/>
    <property type="evidence" value="ECO:0007669"/>
    <property type="project" value="InterPro"/>
</dbReference>
<dbReference type="GO" id="GO:0006235">
    <property type="term" value="P:dTTP biosynthetic process"/>
    <property type="evidence" value="ECO:0007669"/>
    <property type="project" value="UniProtKB-UniRule"/>
</dbReference>
<dbReference type="GO" id="GO:0006227">
    <property type="term" value="P:dUDP biosynthetic process"/>
    <property type="evidence" value="ECO:0007669"/>
    <property type="project" value="TreeGrafter"/>
</dbReference>
<dbReference type="CDD" id="cd01672">
    <property type="entry name" value="TMPK"/>
    <property type="match status" value="1"/>
</dbReference>
<dbReference type="FunFam" id="3.40.50.300:FF:000225">
    <property type="entry name" value="Thymidylate kinase"/>
    <property type="match status" value="1"/>
</dbReference>
<dbReference type="Gene3D" id="3.40.50.300">
    <property type="entry name" value="P-loop containing nucleotide triphosphate hydrolases"/>
    <property type="match status" value="1"/>
</dbReference>
<dbReference type="HAMAP" id="MF_00165">
    <property type="entry name" value="Thymidylate_kinase"/>
    <property type="match status" value="1"/>
</dbReference>
<dbReference type="InterPro" id="IPR027417">
    <property type="entry name" value="P-loop_NTPase"/>
</dbReference>
<dbReference type="InterPro" id="IPR039430">
    <property type="entry name" value="Thymidylate_kin-like_dom"/>
</dbReference>
<dbReference type="InterPro" id="IPR018095">
    <property type="entry name" value="Thymidylate_kin_CS"/>
</dbReference>
<dbReference type="InterPro" id="IPR018094">
    <property type="entry name" value="Thymidylate_kinase"/>
</dbReference>
<dbReference type="NCBIfam" id="TIGR00041">
    <property type="entry name" value="DTMP_kinase"/>
    <property type="match status" value="1"/>
</dbReference>
<dbReference type="PANTHER" id="PTHR10344">
    <property type="entry name" value="THYMIDYLATE KINASE"/>
    <property type="match status" value="1"/>
</dbReference>
<dbReference type="PANTHER" id="PTHR10344:SF4">
    <property type="entry name" value="UMP-CMP KINASE 2, MITOCHONDRIAL"/>
    <property type="match status" value="1"/>
</dbReference>
<dbReference type="Pfam" id="PF02223">
    <property type="entry name" value="Thymidylate_kin"/>
    <property type="match status" value="1"/>
</dbReference>
<dbReference type="SUPFAM" id="SSF52540">
    <property type="entry name" value="P-loop containing nucleoside triphosphate hydrolases"/>
    <property type="match status" value="1"/>
</dbReference>
<dbReference type="PROSITE" id="PS01331">
    <property type="entry name" value="THYMIDYLATE_KINASE"/>
    <property type="match status" value="1"/>
</dbReference>
<name>KTHY_JANSC</name>
<organism>
    <name type="scientific">Jannaschia sp. (strain CCS1)</name>
    <dbReference type="NCBI Taxonomy" id="290400"/>
    <lineage>
        <taxon>Bacteria</taxon>
        <taxon>Pseudomonadati</taxon>
        <taxon>Pseudomonadota</taxon>
        <taxon>Alphaproteobacteria</taxon>
        <taxon>Rhodobacterales</taxon>
        <taxon>Roseobacteraceae</taxon>
        <taxon>Jannaschia</taxon>
    </lineage>
</organism>
<sequence>MPPLFISLEGIDGSGKSTQTARLVDWLRVRGRDPLQTREPGGSEGAEEIRRLLVEGDPDRWSAETEILLFTAARRDHLERTIRPALASGRDVVTDRFADSTRVYQGATRGALRGLVDRIHAEAIEAEPDLTLILDMDPELALSRGLARDSGEDRFEDFGLPFQQKLRAGFQALAREYPDRCHIVDASADPDAIAHTIQTIVGQRLAEA</sequence>
<feature type="chain" id="PRO_1000023204" description="Thymidylate kinase">
    <location>
        <begin position="1"/>
        <end position="208"/>
    </location>
</feature>
<feature type="binding site" evidence="1">
    <location>
        <begin position="10"/>
        <end position="17"/>
    </location>
    <ligand>
        <name>ATP</name>
        <dbReference type="ChEBI" id="CHEBI:30616"/>
    </ligand>
</feature>
<keyword id="KW-0067">ATP-binding</keyword>
<keyword id="KW-0418">Kinase</keyword>
<keyword id="KW-0545">Nucleotide biosynthesis</keyword>
<keyword id="KW-0547">Nucleotide-binding</keyword>
<keyword id="KW-1185">Reference proteome</keyword>
<keyword id="KW-0808">Transferase</keyword>
<gene>
    <name evidence="1" type="primary">tmk</name>
    <name type="ordered locus">Jann_1277</name>
</gene>
<reference key="1">
    <citation type="submission" date="2006-02" db="EMBL/GenBank/DDBJ databases">
        <title>Complete sequence of chromosome of Jannaschia sp. CCS1.</title>
        <authorList>
            <consortium name="US DOE Joint Genome Institute"/>
            <person name="Copeland A."/>
            <person name="Lucas S."/>
            <person name="Lapidus A."/>
            <person name="Barry K."/>
            <person name="Detter J.C."/>
            <person name="Glavina del Rio T."/>
            <person name="Hammon N."/>
            <person name="Israni S."/>
            <person name="Pitluck S."/>
            <person name="Brettin T."/>
            <person name="Bruce D."/>
            <person name="Han C."/>
            <person name="Tapia R."/>
            <person name="Gilna P."/>
            <person name="Chertkov O."/>
            <person name="Saunders E."/>
            <person name="Schmutz J."/>
            <person name="Larimer F."/>
            <person name="Land M."/>
            <person name="Kyrpides N."/>
            <person name="Lykidis A."/>
            <person name="Moran M.A."/>
            <person name="Belas R."/>
            <person name="Ye W."/>
            <person name="Buchan A."/>
            <person name="Gonzalez J.M."/>
            <person name="Schell M.A."/>
            <person name="Richardson P."/>
        </authorList>
    </citation>
    <scope>NUCLEOTIDE SEQUENCE [LARGE SCALE GENOMIC DNA]</scope>
    <source>
        <strain>CCS1</strain>
    </source>
</reference>
<evidence type="ECO:0000255" key="1">
    <source>
        <dbReference type="HAMAP-Rule" id="MF_00165"/>
    </source>
</evidence>